<proteinExistence type="inferred from homology"/>
<protein>
    <recommendedName>
        <fullName evidence="1">Aspartyl/glutamyl-tRNA(Asn/Gln) amidotransferase subunit B</fullName>
        <shortName evidence="1">Asp/Glu-ADT subunit B</shortName>
        <ecNumber evidence="1">6.3.5.-</ecNumber>
    </recommendedName>
</protein>
<accession>Q8THJ0</accession>
<dbReference type="EC" id="6.3.5.-" evidence="1"/>
<dbReference type="EMBL" id="AE010299">
    <property type="protein sequence ID" value="AAM07864.1"/>
    <property type="molecule type" value="Genomic_DNA"/>
</dbReference>
<dbReference type="RefSeq" id="WP_011024400.1">
    <property type="nucleotide sequence ID" value="NC_003552.1"/>
</dbReference>
<dbReference type="SMR" id="Q8THJ0"/>
<dbReference type="FunCoup" id="Q8THJ0">
    <property type="interactions" value="142"/>
</dbReference>
<dbReference type="STRING" id="188937.MA_4524"/>
<dbReference type="EnsemblBacteria" id="AAM07864">
    <property type="protein sequence ID" value="AAM07864"/>
    <property type="gene ID" value="MA_4524"/>
</dbReference>
<dbReference type="GeneID" id="1476418"/>
<dbReference type="KEGG" id="mac:MA_4524"/>
<dbReference type="HOGENOM" id="CLU_019240_0_0_2"/>
<dbReference type="InParanoid" id="Q8THJ0"/>
<dbReference type="OrthoDB" id="52755at2157"/>
<dbReference type="PhylomeDB" id="Q8THJ0"/>
<dbReference type="Proteomes" id="UP000002487">
    <property type="component" value="Chromosome"/>
</dbReference>
<dbReference type="GO" id="GO:0050566">
    <property type="term" value="F:asparaginyl-tRNA synthase (glutamine-hydrolyzing) activity"/>
    <property type="evidence" value="ECO:0007669"/>
    <property type="project" value="RHEA"/>
</dbReference>
<dbReference type="GO" id="GO:0005524">
    <property type="term" value="F:ATP binding"/>
    <property type="evidence" value="ECO:0007669"/>
    <property type="project" value="UniProtKB-KW"/>
</dbReference>
<dbReference type="GO" id="GO:0050567">
    <property type="term" value="F:glutaminyl-tRNA synthase (glutamine-hydrolyzing) activity"/>
    <property type="evidence" value="ECO:0000318"/>
    <property type="project" value="GO_Central"/>
</dbReference>
<dbReference type="GO" id="GO:0070681">
    <property type="term" value="P:glutaminyl-tRNAGln biosynthesis via transamidation"/>
    <property type="evidence" value="ECO:0000318"/>
    <property type="project" value="GO_Central"/>
</dbReference>
<dbReference type="GO" id="GO:0006412">
    <property type="term" value="P:translation"/>
    <property type="evidence" value="ECO:0007669"/>
    <property type="project" value="UniProtKB-UniRule"/>
</dbReference>
<dbReference type="FunFam" id="1.10.10.410:FF:000001">
    <property type="entry name" value="Aspartyl/glutamyl-tRNA(Asn/Gln) amidotransferase subunit B"/>
    <property type="match status" value="1"/>
</dbReference>
<dbReference type="FunFam" id="1.10.150.380:FF:000001">
    <property type="entry name" value="Aspartyl/glutamyl-tRNA(Asn/Gln) amidotransferase subunit B"/>
    <property type="match status" value="1"/>
</dbReference>
<dbReference type="Gene3D" id="1.10.10.410">
    <property type="match status" value="1"/>
</dbReference>
<dbReference type="Gene3D" id="1.10.150.380">
    <property type="entry name" value="GatB domain, N-terminal subdomain"/>
    <property type="match status" value="1"/>
</dbReference>
<dbReference type="HAMAP" id="MF_00121">
    <property type="entry name" value="GatB"/>
    <property type="match status" value="1"/>
</dbReference>
<dbReference type="InterPro" id="IPR017959">
    <property type="entry name" value="Asn/Gln-tRNA_amidoTrfase_suB/E"/>
</dbReference>
<dbReference type="InterPro" id="IPR006075">
    <property type="entry name" value="Asn/Gln-tRNA_Trfase_suB/E_cat"/>
</dbReference>
<dbReference type="InterPro" id="IPR018027">
    <property type="entry name" value="Asn/Gln_amidotransferase"/>
</dbReference>
<dbReference type="InterPro" id="IPR003789">
    <property type="entry name" value="Asn/Gln_tRNA_amidoTrase-B-like"/>
</dbReference>
<dbReference type="InterPro" id="IPR004413">
    <property type="entry name" value="GatB"/>
</dbReference>
<dbReference type="InterPro" id="IPR042114">
    <property type="entry name" value="GatB_C_1"/>
</dbReference>
<dbReference type="InterPro" id="IPR023168">
    <property type="entry name" value="GatB_Yqey_C_2"/>
</dbReference>
<dbReference type="InterPro" id="IPR017958">
    <property type="entry name" value="Gln-tRNA_amidoTrfase_suB_CS"/>
</dbReference>
<dbReference type="InterPro" id="IPR014746">
    <property type="entry name" value="Gln_synth/guanido_kin_cat_dom"/>
</dbReference>
<dbReference type="NCBIfam" id="TIGR00133">
    <property type="entry name" value="gatB"/>
    <property type="match status" value="1"/>
</dbReference>
<dbReference type="NCBIfam" id="NF004012">
    <property type="entry name" value="PRK05477.1-2"/>
    <property type="match status" value="1"/>
</dbReference>
<dbReference type="NCBIfam" id="NF004014">
    <property type="entry name" value="PRK05477.1-4"/>
    <property type="match status" value="1"/>
</dbReference>
<dbReference type="PANTHER" id="PTHR11659">
    <property type="entry name" value="GLUTAMYL-TRNA GLN AMIDOTRANSFERASE SUBUNIT B MITOCHONDRIAL AND PROKARYOTIC PET112-RELATED"/>
    <property type="match status" value="1"/>
</dbReference>
<dbReference type="PANTHER" id="PTHR11659:SF0">
    <property type="entry name" value="GLUTAMYL-TRNA(GLN) AMIDOTRANSFERASE SUBUNIT B, MITOCHONDRIAL"/>
    <property type="match status" value="1"/>
</dbReference>
<dbReference type="Pfam" id="PF02934">
    <property type="entry name" value="GatB_N"/>
    <property type="match status" value="1"/>
</dbReference>
<dbReference type="Pfam" id="PF02637">
    <property type="entry name" value="GatB_Yqey"/>
    <property type="match status" value="1"/>
</dbReference>
<dbReference type="SMART" id="SM00845">
    <property type="entry name" value="GatB_Yqey"/>
    <property type="match status" value="1"/>
</dbReference>
<dbReference type="SUPFAM" id="SSF89095">
    <property type="entry name" value="GatB/YqeY motif"/>
    <property type="match status" value="2"/>
</dbReference>
<dbReference type="SUPFAM" id="SSF55931">
    <property type="entry name" value="Glutamine synthetase/guanido kinase"/>
    <property type="match status" value="1"/>
</dbReference>
<dbReference type="PROSITE" id="PS01234">
    <property type="entry name" value="GATB"/>
    <property type="match status" value="1"/>
</dbReference>
<sequence length="495" mass="55287">MVYENPDGIRIGLEIHVQLNKLKTKMFCGCSTDYHNAAPNTHTCPICLGLPGTLPVLNKKVVEAAIKVGLALEGEIAEETQFHRKNYFYPDLPKGFQVTQYDYPIVSKGKVVIEGEDGEHVVGITRAHMEEDPGKLVHIGSIGKSKGVLIDYNRSGMPLIETVTEPDMRSPKEARRFLDKFRNILEYLDVFDGNLEGAMRVDANVSVHWGTRVEVKNISSHKGVERALLYEIMRQKNVIRRGGTIVQETRHFDEGRGVTLSMRTKEEAEDYRYFREPDLMPMRITDWIPAIKETLPELPDAKRTRFIEQYGITDMHARALTSKIMLADFYEGVCAKGVDPKIAATWTADVFLGELNYRDLAISSYGGKTIGFIHAKDPEVENSFKGSDMVELVTLFAEGKISDRAAVEVIRTILDGTEEKTPSQIIEEKGLFKAEDDLVTKAVAETIAENAAAVQDYLGGTEKSLNFLVGQVMKKTKGTADAKTARELILKELKG</sequence>
<organism>
    <name type="scientific">Methanosarcina acetivorans (strain ATCC 35395 / DSM 2834 / JCM 12185 / C2A)</name>
    <dbReference type="NCBI Taxonomy" id="188937"/>
    <lineage>
        <taxon>Archaea</taxon>
        <taxon>Methanobacteriati</taxon>
        <taxon>Methanobacteriota</taxon>
        <taxon>Stenosarchaea group</taxon>
        <taxon>Methanomicrobia</taxon>
        <taxon>Methanosarcinales</taxon>
        <taxon>Methanosarcinaceae</taxon>
        <taxon>Methanosarcina</taxon>
    </lineage>
</organism>
<keyword id="KW-0067">ATP-binding</keyword>
<keyword id="KW-0436">Ligase</keyword>
<keyword id="KW-0547">Nucleotide-binding</keyword>
<keyword id="KW-0648">Protein biosynthesis</keyword>
<keyword id="KW-1185">Reference proteome</keyword>
<gene>
    <name evidence="1" type="primary">gatB</name>
    <name type="ordered locus">MA_4524</name>
</gene>
<feature type="chain" id="PRO_0000148870" description="Aspartyl/glutamyl-tRNA(Asn/Gln) amidotransferase subunit B">
    <location>
        <begin position="1"/>
        <end position="495"/>
    </location>
</feature>
<comment type="function">
    <text evidence="1">Allows the formation of correctly charged Asn-tRNA(Asn) or Gln-tRNA(Gln) through the transamidation of misacylated Asp-tRNA(Asn) or Glu-tRNA(Gln) in organisms which lack either or both of asparaginyl-tRNA or glutaminyl-tRNA synthetases. The reaction takes place in the presence of glutamine and ATP through an activated phospho-Asp-tRNA(Asn) or phospho-Glu-tRNA(Gln).</text>
</comment>
<comment type="catalytic activity">
    <reaction evidence="1">
        <text>L-glutamyl-tRNA(Gln) + L-glutamine + ATP + H2O = L-glutaminyl-tRNA(Gln) + L-glutamate + ADP + phosphate + H(+)</text>
        <dbReference type="Rhea" id="RHEA:17521"/>
        <dbReference type="Rhea" id="RHEA-COMP:9681"/>
        <dbReference type="Rhea" id="RHEA-COMP:9684"/>
        <dbReference type="ChEBI" id="CHEBI:15377"/>
        <dbReference type="ChEBI" id="CHEBI:15378"/>
        <dbReference type="ChEBI" id="CHEBI:29985"/>
        <dbReference type="ChEBI" id="CHEBI:30616"/>
        <dbReference type="ChEBI" id="CHEBI:43474"/>
        <dbReference type="ChEBI" id="CHEBI:58359"/>
        <dbReference type="ChEBI" id="CHEBI:78520"/>
        <dbReference type="ChEBI" id="CHEBI:78521"/>
        <dbReference type="ChEBI" id="CHEBI:456216"/>
    </reaction>
</comment>
<comment type="catalytic activity">
    <reaction evidence="1">
        <text>L-aspartyl-tRNA(Asn) + L-glutamine + ATP + H2O = L-asparaginyl-tRNA(Asn) + L-glutamate + ADP + phosphate + 2 H(+)</text>
        <dbReference type="Rhea" id="RHEA:14513"/>
        <dbReference type="Rhea" id="RHEA-COMP:9674"/>
        <dbReference type="Rhea" id="RHEA-COMP:9677"/>
        <dbReference type="ChEBI" id="CHEBI:15377"/>
        <dbReference type="ChEBI" id="CHEBI:15378"/>
        <dbReference type="ChEBI" id="CHEBI:29985"/>
        <dbReference type="ChEBI" id="CHEBI:30616"/>
        <dbReference type="ChEBI" id="CHEBI:43474"/>
        <dbReference type="ChEBI" id="CHEBI:58359"/>
        <dbReference type="ChEBI" id="CHEBI:78515"/>
        <dbReference type="ChEBI" id="CHEBI:78516"/>
        <dbReference type="ChEBI" id="CHEBI:456216"/>
    </reaction>
</comment>
<comment type="subunit">
    <text evidence="1">Heterotrimer of A, B and C subunits.</text>
</comment>
<comment type="similarity">
    <text evidence="1">Belongs to the GatB/GatE family. GatB subfamily.</text>
</comment>
<name>GATB_METAC</name>
<reference key="1">
    <citation type="journal article" date="2002" name="Genome Res.">
        <title>The genome of Methanosarcina acetivorans reveals extensive metabolic and physiological diversity.</title>
        <authorList>
            <person name="Galagan J.E."/>
            <person name="Nusbaum C."/>
            <person name="Roy A."/>
            <person name="Endrizzi M.G."/>
            <person name="Macdonald P."/>
            <person name="FitzHugh W."/>
            <person name="Calvo S."/>
            <person name="Engels R."/>
            <person name="Smirnov S."/>
            <person name="Atnoor D."/>
            <person name="Brown A."/>
            <person name="Allen N."/>
            <person name="Naylor J."/>
            <person name="Stange-Thomann N."/>
            <person name="DeArellano K."/>
            <person name="Johnson R."/>
            <person name="Linton L."/>
            <person name="McEwan P."/>
            <person name="McKernan K."/>
            <person name="Talamas J."/>
            <person name="Tirrell A."/>
            <person name="Ye W."/>
            <person name="Zimmer A."/>
            <person name="Barber R.D."/>
            <person name="Cann I."/>
            <person name="Graham D.E."/>
            <person name="Grahame D.A."/>
            <person name="Guss A.M."/>
            <person name="Hedderich R."/>
            <person name="Ingram-Smith C."/>
            <person name="Kuettner H.C."/>
            <person name="Krzycki J.A."/>
            <person name="Leigh J.A."/>
            <person name="Li W."/>
            <person name="Liu J."/>
            <person name="Mukhopadhyay B."/>
            <person name="Reeve J.N."/>
            <person name="Smith K."/>
            <person name="Springer T.A."/>
            <person name="Umayam L.A."/>
            <person name="White O."/>
            <person name="White R.H."/>
            <person name="de Macario E.C."/>
            <person name="Ferry J.G."/>
            <person name="Jarrell K.F."/>
            <person name="Jing H."/>
            <person name="Macario A.J.L."/>
            <person name="Paulsen I.T."/>
            <person name="Pritchett M."/>
            <person name="Sowers K.R."/>
            <person name="Swanson R.V."/>
            <person name="Zinder S.H."/>
            <person name="Lander E."/>
            <person name="Metcalf W.W."/>
            <person name="Birren B."/>
        </authorList>
    </citation>
    <scope>NUCLEOTIDE SEQUENCE [LARGE SCALE GENOMIC DNA]</scope>
    <source>
        <strain>ATCC 35395 / DSM 2834 / JCM 12185 / C2A</strain>
    </source>
</reference>
<evidence type="ECO:0000255" key="1">
    <source>
        <dbReference type="HAMAP-Rule" id="MF_00121"/>
    </source>
</evidence>